<proteinExistence type="inferred from homology"/>
<keyword id="KW-0030">Aminoacyl-tRNA synthetase</keyword>
<keyword id="KW-0067">ATP-binding</keyword>
<keyword id="KW-0963">Cytoplasm</keyword>
<keyword id="KW-0436">Ligase</keyword>
<keyword id="KW-0479">Metal-binding</keyword>
<keyword id="KW-0547">Nucleotide-binding</keyword>
<keyword id="KW-0648">Protein biosynthesis</keyword>
<keyword id="KW-0694">RNA-binding</keyword>
<keyword id="KW-0820">tRNA-binding</keyword>
<keyword id="KW-0862">Zinc</keyword>
<name>SYT_BURVG</name>
<sequence>MVSIRLPDGSVRQYEHPVTVAEVAASIGPGLAKAALGGKLDGELVDTSTVIDRDASLAIVTDKDADGLDIIRHSTAHLLAYAVKELYPEAQVTIGPVIDNGFYYDFAYNRPFTPEDLEKIEKRMQELAKKDEPVTRRVVSRDEAAGYFRSIGEKYKAEIIESIPQSDEIKLYSHGGFTDLCRGPHVPSTGKLKVFKLMKVAGAYWRGDSKNEQLQRIYGTAWTKKEDQDQYLHMLEEAEKRDHRKLGKQLDLFHMQEESPGMVFWHPKGWALWQQVEQYMRRRVNDAGYLEIKTPMIMDRSLWEASGHWQNYRENMFTTESEKRDYAIKPMNCPGHVQVFKHGLRSYRDLPLRYAEFGSCHRNEASGALHGLMRVRGFVQDDAHIFCTEDQFIAESIAFNTLAMSVYKDFGFEHIDIKLSLRPEQRAGTDETWDRAEQGLRDALTACGLTWQELPGEGAFYGPKIEYHIKDALGRSWQCGTLQLDMVLPERLGAEYVAEDNSRRRPVMLHRAIVGSMERFLGILIEHHAGAMPVWLAPFQAIVLNIAESQAEYAQSLAQTLQKQGVRVAADLRNEKISYKIREHTLEKVPYLLVVGDKERDAQTVAVRARGGVDLGVMPVEAFVERLQEDLRSFK</sequence>
<gene>
    <name evidence="1" type="primary">thrS</name>
    <name type="ordered locus">Bcep1808_1439</name>
</gene>
<dbReference type="EC" id="6.1.1.3" evidence="1"/>
<dbReference type="EMBL" id="CP000614">
    <property type="protein sequence ID" value="ABO54447.1"/>
    <property type="molecule type" value="Genomic_DNA"/>
</dbReference>
<dbReference type="SMR" id="A4JDU4"/>
<dbReference type="KEGG" id="bvi:Bcep1808_1439"/>
<dbReference type="eggNOG" id="COG0441">
    <property type="taxonomic scope" value="Bacteria"/>
</dbReference>
<dbReference type="HOGENOM" id="CLU_008554_0_1_4"/>
<dbReference type="Proteomes" id="UP000002287">
    <property type="component" value="Chromosome 1"/>
</dbReference>
<dbReference type="GO" id="GO:0005829">
    <property type="term" value="C:cytosol"/>
    <property type="evidence" value="ECO:0007669"/>
    <property type="project" value="TreeGrafter"/>
</dbReference>
<dbReference type="GO" id="GO:0005524">
    <property type="term" value="F:ATP binding"/>
    <property type="evidence" value="ECO:0007669"/>
    <property type="project" value="UniProtKB-UniRule"/>
</dbReference>
<dbReference type="GO" id="GO:0046872">
    <property type="term" value="F:metal ion binding"/>
    <property type="evidence" value="ECO:0007669"/>
    <property type="project" value="UniProtKB-KW"/>
</dbReference>
<dbReference type="GO" id="GO:0004829">
    <property type="term" value="F:threonine-tRNA ligase activity"/>
    <property type="evidence" value="ECO:0007669"/>
    <property type="project" value="UniProtKB-UniRule"/>
</dbReference>
<dbReference type="GO" id="GO:0000049">
    <property type="term" value="F:tRNA binding"/>
    <property type="evidence" value="ECO:0007669"/>
    <property type="project" value="UniProtKB-KW"/>
</dbReference>
<dbReference type="GO" id="GO:0006435">
    <property type="term" value="P:threonyl-tRNA aminoacylation"/>
    <property type="evidence" value="ECO:0007669"/>
    <property type="project" value="UniProtKB-UniRule"/>
</dbReference>
<dbReference type="CDD" id="cd01667">
    <property type="entry name" value="TGS_ThrRS"/>
    <property type="match status" value="1"/>
</dbReference>
<dbReference type="CDD" id="cd00860">
    <property type="entry name" value="ThrRS_anticodon"/>
    <property type="match status" value="1"/>
</dbReference>
<dbReference type="CDD" id="cd00771">
    <property type="entry name" value="ThrRS_core"/>
    <property type="match status" value="1"/>
</dbReference>
<dbReference type="FunFam" id="3.10.20.30:FF:000005">
    <property type="entry name" value="Threonine--tRNA ligase"/>
    <property type="match status" value="1"/>
</dbReference>
<dbReference type="FunFam" id="3.30.54.20:FF:000002">
    <property type="entry name" value="Threonine--tRNA ligase"/>
    <property type="match status" value="1"/>
</dbReference>
<dbReference type="FunFam" id="3.30.930.10:FF:000002">
    <property type="entry name" value="Threonine--tRNA ligase"/>
    <property type="match status" value="1"/>
</dbReference>
<dbReference type="FunFam" id="3.40.50.800:FF:000001">
    <property type="entry name" value="Threonine--tRNA ligase"/>
    <property type="match status" value="1"/>
</dbReference>
<dbReference type="FunFam" id="3.30.980.10:FF:000005">
    <property type="entry name" value="Threonyl-tRNA synthetase, mitochondrial"/>
    <property type="match status" value="1"/>
</dbReference>
<dbReference type="Gene3D" id="3.10.20.30">
    <property type="match status" value="1"/>
</dbReference>
<dbReference type="Gene3D" id="3.30.54.20">
    <property type="match status" value="1"/>
</dbReference>
<dbReference type="Gene3D" id="3.40.50.800">
    <property type="entry name" value="Anticodon-binding domain"/>
    <property type="match status" value="1"/>
</dbReference>
<dbReference type="Gene3D" id="3.30.930.10">
    <property type="entry name" value="Bira Bifunctional Protein, Domain 2"/>
    <property type="match status" value="1"/>
</dbReference>
<dbReference type="Gene3D" id="3.30.980.10">
    <property type="entry name" value="Threonyl-trna Synthetase, Chain A, domain 2"/>
    <property type="match status" value="1"/>
</dbReference>
<dbReference type="HAMAP" id="MF_00184">
    <property type="entry name" value="Thr_tRNA_synth"/>
    <property type="match status" value="1"/>
</dbReference>
<dbReference type="InterPro" id="IPR002314">
    <property type="entry name" value="aa-tRNA-synt_IIb"/>
</dbReference>
<dbReference type="InterPro" id="IPR006195">
    <property type="entry name" value="aa-tRNA-synth_II"/>
</dbReference>
<dbReference type="InterPro" id="IPR045864">
    <property type="entry name" value="aa-tRNA-synth_II/BPL/LPL"/>
</dbReference>
<dbReference type="InterPro" id="IPR004154">
    <property type="entry name" value="Anticodon-bd"/>
</dbReference>
<dbReference type="InterPro" id="IPR036621">
    <property type="entry name" value="Anticodon-bd_dom_sf"/>
</dbReference>
<dbReference type="InterPro" id="IPR012675">
    <property type="entry name" value="Beta-grasp_dom_sf"/>
</dbReference>
<dbReference type="InterPro" id="IPR004095">
    <property type="entry name" value="TGS"/>
</dbReference>
<dbReference type="InterPro" id="IPR012676">
    <property type="entry name" value="TGS-like"/>
</dbReference>
<dbReference type="InterPro" id="IPR002320">
    <property type="entry name" value="Thr-tRNA-ligase_IIa"/>
</dbReference>
<dbReference type="InterPro" id="IPR018163">
    <property type="entry name" value="Thr/Ala-tRNA-synth_IIc_edit"/>
</dbReference>
<dbReference type="InterPro" id="IPR047246">
    <property type="entry name" value="ThrRS_anticodon"/>
</dbReference>
<dbReference type="InterPro" id="IPR033728">
    <property type="entry name" value="ThrRS_core"/>
</dbReference>
<dbReference type="InterPro" id="IPR012947">
    <property type="entry name" value="tRNA_SAD"/>
</dbReference>
<dbReference type="NCBIfam" id="TIGR00418">
    <property type="entry name" value="thrS"/>
    <property type="match status" value="1"/>
</dbReference>
<dbReference type="PANTHER" id="PTHR11451:SF44">
    <property type="entry name" value="THREONINE--TRNA LIGASE, CHLOROPLASTIC_MITOCHONDRIAL 2"/>
    <property type="match status" value="1"/>
</dbReference>
<dbReference type="PANTHER" id="PTHR11451">
    <property type="entry name" value="THREONINE-TRNA LIGASE"/>
    <property type="match status" value="1"/>
</dbReference>
<dbReference type="Pfam" id="PF03129">
    <property type="entry name" value="HGTP_anticodon"/>
    <property type="match status" value="1"/>
</dbReference>
<dbReference type="Pfam" id="PF02824">
    <property type="entry name" value="TGS"/>
    <property type="match status" value="1"/>
</dbReference>
<dbReference type="Pfam" id="PF00587">
    <property type="entry name" value="tRNA-synt_2b"/>
    <property type="match status" value="1"/>
</dbReference>
<dbReference type="Pfam" id="PF07973">
    <property type="entry name" value="tRNA_SAD"/>
    <property type="match status" value="1"/>
</dbReference>
<dbReference type="PRINTS" id="PR01047">
    <property type="entry name" value="TRNASYNTHTHR"/>
</dbReference>
<dbReference type="SMART" id="SM00863">
    <property type="entry name" value="tRNA_SAD"/>
    <property type="match status" value="1"/>
</dbReference>
<dbReference type="SUPFAM" id="SSF52954">
    <property type="entry name" value="Class II aaRS ABD-related"/>
    <property type="match status" value="1"/>
</dbReference>
<dbReference type="SUPFAM" id="SSF55681">
    <property type="entry name" value="Class II aaRS and biotin synthetases"/>
    <property type="match status" value="1"/>
</dbReference>
<dbReference type="SUPFAM" id="SSF81271">
    <property type="entry name" value="TGS-like"/>
    <property type="match status" value="1"/>
</dbReference>
<dbReference type="SUPFAM" id="SSF55186">
    <property type="entry name" value="ThrRS/AlaRS common domain"/>
    <property type="match status" value="1"/>
</dbReference>
<dbReference type="PROSITE" id="PS50862">
    <property type="entry name" value="AA_TRNA_LIGASE_II"/>
    <property type="match status" value="1"/>
</dbReference>
<dbReference type="PROSITE" id="PS51880">
    <property type="entry name" value="TGS"/>
    <property type="match status" value="1"/>
</dbReference>
<feature type="chain" id="PRO_1000020360" description="Threonine--tRNA ligase">
    <location>
        <begin position="1"/>
        <end position="635"/>
    </location>
</feature>
<feature type="domain" description="TGS" evidence="2">
    <location>
        <begin position="1"/>
        <end position="61"/>
    </location>
</feature>
<feature type="region of interest" description="Catalytic" evidence="1">
    <location>
        <begin position="242"/>
        <end position="533"/>
    </location>
</feature>
<feature type="binding site" evidence="1">
    <location>
        <position position="333"/>
    </location>
    <ligand>
        <name>Zn(2+)</name>
        <dbReference type="ChEBI" id="CHEBI:29105"/>
    </ligand>
</feature>
<feature type="binding site" evidence="1">
    <location>
        <position position="384"/>
    </location>
    <ligand>
        <name>Zn(2+)</name>
        <dbReference type="ChEBI" id="CHEBI:29105"/>
    </ligand>
</feature>
<feature type="binding site" evidence="1">
    <location>
        <position position="510"/>
    </location>
    <ligand>
        <name>Zn(2+)</name>
        <dbReference type="ChEBI" id="CHEBI:29105"/>
    </ligand>
</feature>
<protein>
    <recommendedName>
        <fullName evidence="1">Threonine--tRNA ligase</fullName>
        <ecNumber evidence="1">6.1.1.3</ecNumber>
    </recommendedName>
    <alternativeName>
        <fullName evidence="1">Threonyl-tRNA synthetase</fullName>
        <shortName evidence="1">ThrRS</shortName>
    </alternativeName>
</protein>
<accession>A4JDU4</accession>
<organism>
    <name type="scientific">Burkholderia vietnamiensis (strain G4 / LMG 22486)</name>
    <name type="common">Burkholderia cepacia (strain R1808)</name>
    <dbReference type="NCBI Taxonomy" id="269482"/>
    <lineage>
        <taxon>Bacteria</taxon>
        <taxon>Pseudomonadati</taxon>
        <taxon>Pseudomonadota</taxon>
        <taxon>Betaproteobacteria</taxon>
        <taxon>Burkholderiales</taxon>
        <taxon>Burkholderiaceae</taxon>
        <taxon>Burkholderia</taxon>
        <taxon>Burkholderia cepacia complex</taxon>
    </lineage>
</organism>
<comment type="function">
    <text evidence="1">Catalyzes the attachment of threonine to tRNA(Thr) in a two-step reaction: L-threonine is first activated by ATP to form Thr-AMP and then transferred to the acceptor end of tRNA(Thr). Also edits incorrectly charged L-seryl-tRNA(Thr).</text>
</comment>
<comment type="catalytic activity">
    <reaction evidence="1">
        <text>tRNA(Thr) + L-threonine + ATP = L-threonyl-tRNA(Thr) + AMP + diphosphate + H(+)</text>
        <dbReference type="Rhea" id="RHEA:24624"/>
        <dbReference type="Rhea" id="RHEA-COMP:9670"/>
        <dbReference type="Rhea" id="RHEA-COMP:9704"/>
        <dbReference type="ChEBI" id="CHEBI:15378"/>
        <dbReference type="ChEBI" id="CHEBI:30616"/>
        <dbReference type="ChEBI" id="CHEBI:33019"/>
        <dbReference type="ChEBI" id="CHEBI:57926"/>
        <dbReference type="ChEBI" id="CHEBI:78442"/>
        <dbReference type="ChEBI" id="CHEBI:78534"/>
        <dbReference type="ChEBI" id="CHEBI:456215"/>
        <dbReference type="EC" id="6.1.1.3"/>
    </reaction>
</comment>
<comment type="cofactor">
    <cofactor evidence="1">
        <name>Zn(2+)</name>
        <dbReference type="ChEBI" id="CHEBI:29105"/>
    </cofactor>
    <text evidence="1">Binds 1 zinc ion per subunit.</text>
</comment>
<comment type="subunit">
    <text evidence="1">Homodimer.</text>
</comment>
<comment type="subcellular location">
    <subcellularLocation>
        <location evidence="1">Cytoplasm</location>
    </subcellularLocation>
</comment>
<comment type="similarity">
    <text evidence="1">Belongs to the class-II aminoacyl-tRNA synthetase family.</text>
</comment>
<evidence type="ECO:0000255" key="1">
    <source>
        <dbReference type="HAMAP-Rule" id="MF_00184"/>
    </source>
</evidence>
<evidence type="ECO:0000255" key="2">
    <source>
        <dbReference type="PROSITE-ProRule" id="PRU01228"/>
    </source>
</evidence>
<reference key="1">
    <citation type="submission" date="2007-03" db="EMBL/GenBank/DDBJ databases">
        <title>Complete sequence of chromosome 1 of Burkholderia vietnamiensis G4.</title>
        <authorList>
            <consortium name="US DOE Joint Genome Institute"/>
            <person name="Copeland A."/>
            <person name="Lucas S."/>
            <person name="Lapidus A."/>
            <person name="Barry K."/>
            <person name="Detter J.C."/>
            <person name="Glavina del Rio T."/>
            <person name="Hammon N."/>
            <person name="Israni S."/>
            <person name="Dalin E."/>
            <person name="Tice H."/>
            <person name="Pitluck S."/>
            <person name="Chain P."/>
            <person name="Malfatti S."/>
            <person name="Shin M."/>
            <person name="Vergez L."/>
            <person name="Schmutz J."/>
            <person name="Larimer F."/>
            <person name="Land M."/>
            <person name="Hauser L."/>
            <person name="Kyrpides N."/>
            <person name="Tiedje J."/>
            <person name="Richardson P."/>
        </authorList>
    </citation>
    <scope>NUCLEOTIDE SEQUENCE [LARGE SCALE GENOMIC DNA]</scope>
    <source>
        <strain>G4 / LMG 22486</strain>
    </source>
</reference>